<feature type="peptide" id="PRO_0000044147" description="Hypothalamic tetradecapeptide">
    <location>
        <begin position="1"/>
        <end position="14"/>
    </location>
</feature>
<feature type="modified residue" description="Tyrosine amide" evidence="1">
    <location>
        <position position="14"/>
    </location>
</feature>
<proteinExistence type="evidence at protein level"/>
<sequence length="14" mass="1648">ARYGKSPYLYPLGY</sequence>
<evidence type="ECO:0000269" key="1">
    <source ref="1"/>
</evidence>
<organism>
    <name type="scientific">Sus scrofa</name>
    <name type="common">Pig</name>
    <dbReference type="NCBI Taxonomy" id="9823"/>
    <lineage>
        <taxon>Eukaryota</taxon>
        <taxon>Metazoa</taxon>
        <taxon>Chordata</taxon>
        <taxon>Craniata</taxon>
        <taxon>Vertebrata</taxon>
        <taxon>Euteleostomi</taxon>
        <taxon>Mammalia</taxon>
        <taxon>Eutheria</taxon>
        <taxon>Laurasiatheria</taxon>
        <taxon>Artiodactyla</taxon>
        <taxon>Suina</taxon>
        <taxon>Suidae</taxon>
        <taxon>Sus</taxon>
    </lineage>
</organism>
<reference key="1">
    <citation type="submission" date="1976-11" db="PIR data bank">
        <authorList>
            <person name="Schlesinger D.H."/>
            <person name="Niall H.D."/>
            <person name="Linthicum G.L."/>
            <person name="Dupont A."/>
            <person name="Schally A.V."/>
        </authorList>
    </citation>
    <scope>PROTEIN SEQUENCE</scope>
    <scope>AMIDATION AT TYR-14</scope>
</reference>
<accession>P01155</accession>
<protein>
    <recommendedName>
        <fullName>Hypothalamic tetradecapeptide</fullName>
    </recommendedName>
</protein>
<keyword id="KW-0027">Amidation</keyword>
<keyword id="KW-0903">Direct protein sequencing</keyword>
<keyword id="KW-1185">Reference proteome</keyword>
<dbReference type="PIR" id="A01419">
    <property type="entry name" value="NYPG14"/>
</dbReference>
<dbReference type="InParanoid" id="P01155"/>
<dbReference type="Proteomes" id="UP000008227">
    <property type="component" value="Unplaced"/>
</dbReference>
<dbReference type="Proteomes" id="UP000314985">
    <property type="component" value="Unplaced"/>
</dbReference>
<dbReference type="Proteomes" id="UP000694570">
    <property type="component" value="Unplaced"/>
</dbReference>
<dbReference type="Proteomes" id="UP000694571">
    <property type="component" value="Unplaced"/>
</dbReference>
<dbReference type="Proteomes" id="UP000694720">
    <property type="component" value="Unplaced"/>
</dbReference>
<dbReference type="Proteomes" id="UP000694722">
    <property type="component" value="Unplaced"/>
</dbReference>
<dbReference type="Proteomes" id="UP000694723">
    <property type="component" value="Unplaced"/>
</dbReference>
<dbReference type="Proteomes" id="UP000694724">
    <property type="component" value="Unplaced"/>
</dbReference>
<dbReference type="Proteomes" id="UP000694725">
    <property type="component" value="Unplaced"/>
</dbReference>
<dbReference type="Proteomes" id="UP000694726">
    <property type="component" value="Unplaced"/>
</dbReference>
<dbReference type="Proteomes" id="UP000694727">
    <property type="component" value="Unplaced"/>
</dbReference>
<dbReference type="Proteomes" id="UP000694728">
    <property type="component" value="Unplaced"/>
</dbReference>
<name>HY14_PIG</name>